<proteinExistence type="evidence at protein level"/>
<feature type="signal peptide" evidence="2">
    <location>
        <begin position="1"/>
        <end position="50"/>
    </location>
</feature>
<feature type="propeptide" id="PRO_0000023482" evidence="2">
    <location>
        <begin position="51"/>
        <end position="266"/>
    </location>
</feature>
<feature type="chain" id="PRO_0000023483" description="Pectinesterase 3">
    <location>
        <begin position="267"/>
        <end position="584"/>
    </location>
</feature>
<feature type="active site" description="Proton donor" evidence="3">
    <location>
        <position position="401"/>
    </location>
</feature>
<feature type="active site" description="Nucleophile" evidence="3">
    <location>
        <position position="422"/>
    </location>
</feature>
<feature type="binding site" evidence="1">
    <location>
        <position position="348"/>
    </location>
    <ligand>
        <name>substrate</name>
    </ligand>
</feature>
<feature type="binding site" evidence="1">
    <location>
        <position position="378"/>
    </location>
    <ligand>
        <name>substrate</name>
    </ligand>
</feature>
<feature type="binding site" evidence="1">
    <location>
        <position position="490"/>
    </location>
    <ligand>
        <name>substrate</name>
    </ligand>
</feature>
<feature type="binding site" evidence="1">
    <location>
        <position position="492"/>
    </location>
    <ligand>
        <name>substrate</name>
    </ligand>
</feature>
<feature type="site" description="Transition state stabilizer" evidence="1">
    <location>
        <position position="400"/>
    </location>
</feature>
<feature type="glycosylation site" description="N-linked (GlcNAc...) asparagine" evidence="2">
    <location>
        <position position="108"/>
    </location>
</feature>
<feature type="glycosylation site" description="N-linked (GlcNAc...) asparagine" evidence="2">
    <location>
        <position position="129"/>
    </location>
</feature>
<feature type="glycosylation site" description="N-linked (GlcNAc...) asparagine" evidence="2">
    <location>
        <position position="226"/>
    </location>
</feature>
<feature type="disulfide bond" evidence="1">
    <location>
        <begin position="415"/>
        <end position="435"/>
    </location>
</feature>
<comment type="function">
    <text evidence="1">Acts in the modification of cell walls via demethylesterification of cell wall pectin.</text>
</comment>
<comment type="catalytic activity">
    <reaction evidence="4">
        <text>[(1-&gt;4)-alpha-D-galacturonosyl methyl ester](n) + n H2O = [(1-&gt;4)-alpha-D-galacturonosyl](n) + n methanol + n H(+)</text>
        <dbReference type="Rhea" id="RHEA:22380"/>
        <dbReference type="Rhea" id="RHEA-COMP:14570"/>
        <dbReference type="Rhea" id="RHEA-COMP:14573"/>
        <dbReference type="ChEBI" id="CHEBI:15377"/>
        <dbReference type="ChEBI" id="CHEBI:15378"/>
        <dbReference type="ChEBI" id="CHEBI:17790"/>
        <dbReference type="ChEBI" id="CHEBI:140522"/>
        <dbReference type="ChEBI" id="CHEBI:140523"/>
        <dbReference type="EC" id="3.1.1.11"/>
    </reaction>
</comment>
<comment type="pathway">
    <text>Glycan metabolism; pectin degradation; 2-dehydro-3-deoxy-D-gluconate from pectin: step 1/5.</text>
</comment>
<comment type="subcellular location">
    <subcellularLocation>
        <location evidence="4">Secreted</location>
        <location evidence="4">Cell wall</location>
    </subcellularLocation>
</comment>
<comment type="tissue specificity">
    <text evidence="4">In the peel, expression is localized to the region of the flavedo close to the oil glands, and to the innermost layer of the albedo. In the lamella, expression is localized to the cell layers opposing the fruit tissue, and to the parenchyma surrounding the vascular tissue. In the fruit vesicles, expression is restricted to the peripheral cell layers and stalk cells. High levels of expression are detected in the core matrix.</text>
</comment>
<comment type="miscellaneous">
    <text>The PMEI region may act as an autoinhibitory domain and prevent untimely PME activity during transport.</text>
</comment>
<comment type="similarity">
    <text evidence="5">In the N-terminal section; belongs to the PMEI family.</text>
</comment>
<comment type="similarity">
    <text evidence="5">In the C-terminal section; belongs to the pectinesterase family.</text>
</comment>
<sequence>MTRIKEFFTKLSESSTNQNISNIPKKKKKLFLALFATLLVVAAVIGIVAGVNSRKNSGDNGNEPHHAILKSSCSSTRYPDLCFSAIAAVPEASKKVTSQKDVIEMSLNITTTAVEHNYFGIQKLLKRTNLTKREKVALHDCLETIDETLDELHKAVEDLEEYPNKKSLSQHADDLKTLMSAAMTNQGTCLDGFSHDDANKHVRDALSDGQVHVEKMCSNALAMIKNMTDTDMMIMRTSNNRKLIEETSTVDGWPAWLSTGDRRLLQSSSVTPNVVVAADGSGNFKTVAASVAAAPQGGTKRYIIRIKAGVYRENVEVTKKHKNIMFIGDGRTRTIITGSRNVVDGSTTFKSATVAVVGEGFLARDITFQNTAGPSKHQAVALRVGADLSAFYNCDMLAYQDTLYVHSNRQFFVNCLIAGTVDFIFGNAAAVLQNCDIHARKPNSGQKNMVTAQGRADPNQNTGIVIQKSRIGATSDLKPVQGSFPTYLGRPWKEYSRTVIMQSSITDVIHPAGWHEWDGNFALNTLFYGEHQNAGAGAGTSGRVKWKGFRVITSATEAQAFTPGSFIAGSSWLGSTGFPFSLGL</sequence>
<protein>
    <recommendedName>
        <fullName>Pectinesterase 3</fullName>
        <shortName>PE 3</shortName>
        <ecNumber>3.1.1.11</ecNumber>
    </recommendedName>
    <alternativeName>
        <fullName>Pectin methylesterase 3</fullName>
    </alternativeName>
</protein>
<accession>P83948</accession>
<name>PME3_CITSI</name>
<evidence type="ECO:0000250" key="1"/>
<evidence type="ECO:0000255" key="2"/>
<evidence type="ECO:0000255" key="3">
    <source>
        <dbReference type="PROSITE-ProRule" id="PRU10040"/>
    </source>
</evidence>
<evidence type="ECO:0000269" key="4">
    <source>
    </source>
</evidence>
<evidence type="ECO:0000305" key="5"/>
<keyword id="KW-0063">Aspartyl esterase</keyword>
<keyword id="KW-0134">Cell wall</keyword>
<keyword id="KW-0961">Cell wall biogenesis/degradation</keyword>
<keyword id="KW-0903">Direct protein sequencing</keyword>
<keyword id="KW-1015">Disulfide bond</keyword>
<keyword id="KW-0325">Glycoprotein</keyword>
<keyword id="KW-0378">Hydrolase</keyword>
<keyword id="KW-0964">Secreted</keyword>
<keyword id="KW-0732">Signal</keyword>
<organism>
    <name type="scientific">Citrus sinensis</name>
    <name type="common">Sweet orange</name>
    <name type="synonym">Citrus aurantium var. sinensis</name>
    <dbReference type="NCBI Taxonomy" id="2711"/>
    <lineage>
        <taxon>Eukaryota</taxon>
        <taxon>Viridiplantae</taxon>
        <taxon>Streptophyta</taxon>
        <taxon>Embryophyta</taxon>
        <taxon>Tracheophyta</taxon>
        <taxon>Spermatophyta</taxon>
        <taxon>Magnoliopsida</taxon>
        <taxon>eudicotyledons</taxon>
        <taxon>Gunneridae</taxon>
        <taxon>Pentapetalae</taxon>
        <taxon>rosids</taxon>
        <taxon>malvids</taxon>
        <taxon>Sapindales</taxon>
        <taxon>Rutaceae</taxon>
        <taxon>Aurantioideae</taxon>
        <taxon>Citrus</taxon>
    </lineage>
</organism>
<dbReference type="EC" id="3.1.1.11"/>
<dbReference type="SMR" id="P83948"/>
<dbReference type="PaxDb" id="2711-XP_006465802.1"/>
<dbReference type="eggNOG" id="ENOG502QVK0">
    <property type="taxonomic scope" value="Eukaryota"/>
</dbReference>
<dbReference type="BRENDA" id="3.1.1.11">
    <property type="organism ID" value="1426"/>
</dbReference>
<dbReference type="UniPathway" id="UPA00545">
    <property type="reaction ID" value="UER00823"/>
</dbReference>
<dbReference type="GO" id="GO:0005576">
    <property type="term" value="C:extracellular region"/>
    <property type="evidence" value="ECO:0007669"/>
    <property type="project" value="UniProtKB-KW"/>
</dbReference>
<dbReference type="GO" id="GO:0004857">
    <property type="term" value="F:enzyme inhibitor activity"/>
    <property type="evidence" value="ECO:0007669"/>
    <property type="project" value="InterPro"/>
</dbReference>
<dbReference type="GO" id="GO:0030599">
    <property type="term" value="F:pectinesterase activity"/>
    <property type="evidence" value="ECO:0007669"/>
    <property type="project" value="UniProtKB-EC"/>
</dbReference>
<dbReference type="GO" id="GO:0042545">
    <property type="term" value="P:cell wall modification"/>
    <property type="evidence" value="ECO:0007669"/>
    <property type="project" value="InterPro"/>
</dbReference>
<dbReference type="GO" id="GO:0045490">
    <property type="term" value="P:pectin catabolic process"/>
    <property type="evidence" value="ECO:0007669"/>
    <property type="project" value="UniProtKB-UniPathway"/>
</dbReference>
<dbReference type="CDD" id="cd15798">
    <property type="entry name" value="PMEI-like_3"/>
    <property type="match status" value="1"/>
</dbReference>
<dbReference type="FunFam" id="1.20.140.40:FF:000010">
    <property type="entry name" value="Pectinesterase"/>
    <property type="match status" value="1"/>
</dbReference>
<dbReference type="FunFam" id="2.160.20.10:FF:000001">
    <property type="entry name" value="Pectinesterase"/>
    <property type="match status" value="1"/>
</dbReference>
<dbReference type="Gene3D" id="1.20.140.40">
    <property type="entry name" value="Invertase/pectin methylesterase inhibitor family protein"/>
    <property type="match status" value="1"/>
</dbReference>
<dbReference type="Gene3D" id="2.160.20.10">
    <property type="entry name" value="Single-stranded right-handed beta-helix, Pectin lyase-like"/>
    <property type="match status" value="1"/>
</dbReference>
<dbReference type="InterPro" id="IPR035513">
    <property type="entry name" value="Invertase/methylesterase_inhib"/>
</dbReference>
<dbReference type="InterPro" id="IPR012334">
    <property type="entry name" value="Pectin_lyas_fold"/>
</dbReference>
<dbReference type="InterPro" id="IPR011050">
    <property type="entry name" value="Pectin_lyase_fold/virulence"/>
</dbReference>
<dbReference type="InterPro" id="IPR033131">
    <property type="entry name" value="Pectinesterase_Asp_AS"/>
</dbReference>
<dbReference type="InterPro" id="IPR000070">
    <property type="entry name" value="Pectinesterase_cat"/>
</dbReference>
<dbReference type="InterPro" id="IPR006501">
    <property type="entry name" value="Pectinesterase_inhib_dom"/>
</dbReference>
<dbReference type="InterPro" id="IPR018040">
    <property type="entry name" value="Pectinesterase_Tyr_AS"/>
</dbReference>
<dbReference type="NCBIfam" id="TIGR01614">
    <property type="entry name" value="PME_inhib"/>
    <property type="match status" value="1"/>
</dbReference>
<dbReference type="PANTHER" id="PTHR31707">
    <property type="entry name" value="PECTINESTERASE"/>
    <property type="match status" value="1"/>
</dbReference>
<dbReference type="Pfam" id="PF01095">
    <property type="entry name" value="Pectinesterase"/>
    <property type="match status" value="1"/>
</dbReference>
<dbReference type="Pfam" id="PF04043">
    <property type="entry name" value="PMEI"/>
    <property type="match status" value="1"/>
</dbReference>
<dbReference type="SMART" id="SM00856">
    <property type="entry name" value="PMEI"/>
    <property type="match status" value="1"/>
</dbReference>
<dbReference type="SUPFAM" id="SSF51126">
    <property type="entry name" value="Pectin lyase-like"/>
    <property type="match status" value="1"/>
</dbReference>
<dbReference type="SUPFAM" id="SSF101148">
    <property type="entry name" value="Plant invertase/pectin methylesterase inhibitor"/>
    <property type="match status" value="1"/>
</dbReference>
<dbReference type="PROSITE" id="PS00800">
    <property type="entry name" value="PECTINESTERASE_1"/>
    <property type="match status" value="1"/>
</dbReference>
<dbReference type="PROSITE" id="PS00503">
    <property type="entry name" value="PECTINESTERASE_2"/>
    <property type="match status" value="1"/>
</dbReference>
<reference key="1">
    <citation type="journal article" date="1998" name="Planta">
        <title>Pectin methyl esterase from orange fruit: characterization and localization by in-situ hybridization and immunohistochemistry.</title>
        <authorList>
            <person name="Christensen T.M.I.E."/>
            <person name="Nielsen J.E."/>
            <person name="Kreiberg J.D."/>
            <person name="Rasmussen P."/>
            <person name="Mikkelsen J.D."/>
        </authorList>
    </citation>
    <scope>NUCLEOTIDE SEQUENCE [MRNA]</scope>
    <scope>PROTEIN SEQUENCE OF 267-279; 302-305; 308-320; 323-330; 351-364; 393-404; 448-466; 469-506 AND 548-579</scope>
    <scope>CATALYTIC ACTIVITY</scope>
    <scope>SUBCELLULAR LOCATION</scope>
    <scope>TISSUE SPECIFICITY</scope>
    <source>
        <tissue>Peelings</tissue>
    </source>
</reference>